<protein>
    <recommendedName>
        <fullName>UPF0346 protein in crr 3'region</fullName>
    </recommendedName>
</protein>
<evidence type="ECO:0000305" key="1"/>
<sequence>MKNYSFYQFVMTVRGRHDDKGRLAEEIFDDLAFPKHDDDFNILSDYIETHGDFTLPMSVFDDLYEEYTEWLKF</sequence>
<name>YCRR_STAAU</name>
<reference key="1">
    <citation type="submission" date="2001-02" db="EMBL/GenBank/DDBJ databases">
        <title>Identification of a putative methionine sulfoxide reductase locus in Staphylococcus aureus.</title>
        <authorList>
            <person name="Singh V.K."/>
            <person name="Wilkinson B.J."/>
            <person name="Jayaswal R.K."/>
        </authorList>
    </citation>
    <scope>NUCLEOTIDE SEQUENCE [GENOMIC DNA]</scope>
</reference>
<accession>Q7BEF3</accession>
<dbReference type="EMBL" id="AF349112">
    <property type="protein sequence ID" value="AAK83254.1"/>
    <property type="molecule type" value="Genomic_DNA"/>
</dbReference>
<dbReference type="RefSeq" id="WP_000801007.1">
    <property type="nucleotide sequence ID" value="NZ_WYDB01000002.1"/>
</dbReference>
<dbReference type="SMR" id="Q7BEF3"/>
<dbReference type="OMA" id="WLMTNRN"/>
<dbReference type="Gene3D" id="1.10.150.260">
    <property type="entry name" value="YozE SAM-like"/>
    <property type="match status" value="1"/>
</dbReference>
<dbReference type="HAMAP" id="MF_01538">
    <property type="entry name" value="UPF0346"/>
    <property type="match status" value="1"/>
</dbReference>
<dbReference type="InterPro" id="IPR010673">
    <property type="entry name" value="UPF0346"/>
</dbReference>
<dbReference type="InterPro" id="IPR023089">
    <property type="entry name" value="YozE_SAM-like"/>
</dbReference>
<dbReference type="InterPro" id="IPR036806">
    <property type="entry name" value="YozE_SAM-like_sf"/>
</dbReference>
<dbReference type="NCBIfam" id="NF010193">
    <property type="entry name" value="PRK13672.1"/>
    <property type="match status" value="1"/>
</dbReference>
<dbReference type="Pfam" id="PF06855">
    <property type="entry name" value="YozE_SAM_like"/>
    <property type="match status" value="1"/>
</dbReference>
<dbReference type="PIRSF" id="PIRSF037262">
    <property type="entry name" value="UCP037262"/>
    <property type="match status" value="1"/>
</dbReference>
<dbReference type="SUPFAM" id="SSF140652">
    <property type="entry name" value="YozE-like"/>
    <property type="match status" value="1"/>
</dbReference>
<comment type="similarity">
    <text evidence="1">Belongs to the UPF0346 family.</text>
</comment>
<proteinExistence type="inferred from homology"/>
<feature type="chain" id="PRO_0000164286" description="UPF0346 protein in crr 3'region">
    <location>
        <begin position="1"/>
        <end position="73"/>
    </location>
</feature>
<organism>
    <name type="scientific">Staphylococcus aureus</name>
    <dbReference type="NCBI Taxonomy" id="1280"/>
    <lineage>
        <taxon>Bacteria</taxon>
        <taxon>Bacillati</taxon>
        <taxon>Bacillota</taxon>
        <taxon>Bacilli</taxon>
        <taxon>Bacillales</taxon>
        <taxon>Staphylococcaceae</taxon>
        <taxon>Staphylococcus</taxon>
    </lineage>
</organism>